<gene>
    <name evidence="1" type="primary">ruvA</name>
    <name type="ordered locus">ECIAI39_1188</name>
</gene>
<comment type="function">
    <text evidence="1">The RuvA-RuvB-RuvC complex processes Holliday junction (HJ) DNA during genetic recombination and DNA repair, while the RuvA-RuvB complex plays an important role in the rescue of blocked DNA replication forks via replication fork reversal (RFR). RuvA specifically binds to HJ cruciform DNA, conferring on it an open structure. The RuvB hexamer acts as an ATP-dependent pump, pulling dsDNA into and through the RuvAB complex. HJ branch migration allows RuvC to scan DNA until it finds its consensus sequence, where it cleaves and resolves the cruciform DNA.</text>
</comment>
<comment type="subunit">
    <text evidence="1">Homotetramer. Forms an RuvA(8)-RuvB(12)-Holliday junction (HJ) complex. HJ DNA is sandwiched between 2 RuvA tetramers; dsDNA enters through RuvA and exits via RuvB. An RuvB hexamer assembles on each DNA strand where it exits the tetramer. Each RuvB hexamer is contacted by two RuvA subunits (via domain III) on 2 adjacent RuvB subunits; this complex drives branch migration. In the full resolvosome a probable DNA-RuvA(4)-RuvB(12)-RuvC(2) complex forms which resolves the HJ.</text>
</comment>
<comment type="subcellular location">
    <subcellularLocation>
        <location evidence="1">Cytoplasm</location>
    </subcellularLocation>
</comment>
<comment type="domain">
    <text evidence="1">Has three domains with a flexible linker between the domains II and III and assumes an 'L' shape. Domain III is highly mobile and contacts RuvB.</text>
</comment>
<comment type="similarity">
    <text evidence="1">Belongs to the RuvA family.</text>
</comment>
<keyword id="KW-0963">Cytoplasm</keyword>
<keyword id="KW-0227">DNA damage</keyword>
<keyword id="KW-0233">DNA recombination</keyword>
<keyword id="KW-0234">DNA repair</keyword>
<keyword id="KW-0238">DNA-binding</keyword>
<keyword id="KW-0742">SOS response</keyword>
<dbReference type="EMBL" id="CU928164">
    <property type="protein sequence ID" value="CAR17322.1"/>
    <property type="molecule type" value="Genomic_DNA"/>
</dbReference>
<dbReference type="RefSeq" id="WP_000580323.1">
    <property type="nucleotide sequence ID" value="NC_011750.1"/>
</dbReference>
<dbReference type="RefSeq" id="YP_002407196.1">
    <property type="nucleotide sequence ID" value="NC_011750.1"/>
</dbReference>
<dbReference type="SMR" id="B7NS57"/>
<dbReference type="STRING" id="585057.ECIAI39_1188"/>
<dbReference type="GeneID" id="75057740"/>
<dbReference type="KEGG" id="ect:ECIAI39_1188"/>
<dbReference type="PATRIC" id="fig|585057.6.peg.1245"/>
<dbReference type="HOGENOM" id="CLU_087936_0_0_6"/>
<dbReference type="Proteomes" id="UP000000749">
    <property type="component" value="Chromosome"/>
</dbReference>
<dbReference type="GO" id="GO:0005737">
    <property type="term" value="C:cytoplasm"/>
    <property type="evidence" value="ECO:0007669"/>
    <property type="project" value="UniProtKB-SubCell"/>
</dbReference>
<dbReference type="GO" id="GO:0009379">
    <property type="term" value="C:Holliday junction helicase complex"/>
    <property type="evidence" value="ECO:0007669"/>
    <property type="project" value="InterPro"/>
</dbReference>
<dbReference type="GO" id="GO:0048476">
    <property type="term" value="C:Holliday junction resolvase complex"/>
    <property type="evidence" value="ECO:0007669"/>
    <property type="project" value="UniProtKB-UniRule"/>
</dbReference>
<dbReference type="GO" id="GO:0005524">
    <property type="term" value="F:ATP binding"/>
    <property type="evidence" value="ECO:0007669"/>
    <property type="project" value="InterPro"/>
</dbReference>
<dbReference type="GO" id="GO:0000400">
    <property type="term" value="F:four-way junction DNA binding"/>
    <property type="evidence" value="ECO:0007669"/>
    <property type="project" value="UniProtKB-UniRule"/>
</dbReference>
<dbReference type="GO" id="GO:0009378">
    <property type="term" value="F:four-way junction helicase activity"/>
    <property type="evidence" value="ECO:0007669"/>
    <property type="project" value="InterPro"/>
</dbReference>
<dbReference type="GO" id="GO:0006310">
    <property type="term" value="P:DNA recombination"/>
    <property type="evidence" value="ECO:0007669"/>
    <property type="project" value="UniProtKB-UniRule"/>
</dbReference>
<dbReference type="GO" id="GO:0006281">
    <property type="term" value="P:DNA repair"/>
    <property type="evidence" value="ECO:0007669"/>
    <property type="project" value="UniProtKB-UniRule"/>
</dbReference>
<dbReference type="GO" id="GO:0009432">
    <property type="term" value="P:SOS response"/>
    <property type="evidence" value="ECO:0007669"/>
    <property type="project" value="UniProtKB-UniRule"/>
</dbReference>
<dbReference type="CDD" id="cd14332">
    <property type="entry name" value="UBA_RuvA_C"/>
    <property type="match status" value="1"/>
</dbReference>
<dbReference type="FunFam" id="1.10.150.20:FF:000012">
    <property type="entry name" value="Holliday junction ATP-dependent DNA helicase RuvA"/>
    <property type="match status" value="1"/>
</dbReference>
<dbReference type="FunFam" id="1.10.8.10:FF:000008">
    <property type="entry name" value="Holliday junction ATP-dependent DNA helicase RuvA"/>
    <property type="match status" value="1"/>
</dbReference>
<dbReference type="FunFam" id="2.40.50.140:FF:000083">
    <property type="entry name" value="Holliday junction ATP-dependent DNA helicase RuvA"/>
    <property type="match status" value="1"/>
</dbReference>
<dbReference type="Gene3D" id="1.10.150.20">
    <property type="entry name" value="5' to 3' exonuclease, C-terminal subdomain"/>
    <property type="match status" value="1"/>
</dbReference>
<dbReference type="Gene3D" id="1.10.8.10">
    <property type="entry name" value="DNA helicase RuvA subunit, C-terminal domain"/>
    <property type="match status" value="1"/>
</dbReference>
<dbReference type="Gene3D" id="2.40.50.140">
    <property type="entry name" value="Nucleic acid-binding proteins"/>
    <property type="match status" value="1"/>
</dbReference>
<dbReference type="HAMAP" id="MF_00031">
    <property type="entry name" value="DNA_HJ_migration_RuvA"/>
    <property type="match status" value="1"/>
</dbReference>
<dbReference type="InterPro" id="IPR013849">
    <property type="entry name" value="DNA_helicase_Holl-junc_RuvA_I"/>
</dbReference>
<dbReference type="InterPro" id="IPR003583">
    <property type="entry name" value="Hlx-hairpin-Hlx_DNA-bd_motif"/>
</dbReference>
<dbReference type="InterPro" id="IPR012340">
    <property type="entry name" value="NA-bd_OB-fold"/>
</dbReference>
<dbReference type="InterPro" id="IPR000085">
    <property type="entry name" value="RuvA"/>
</dbReference>
<dbReference type="InterPro" id="IPR010994">
    <property type="entry name" value="RuvA_2-like"/>
</dbReference>
<dbReference type="InterPro" id="IPR011114">
    <property type="entry name" value="RuvA_C"/>
</dbReference>
<dbReference type="InterPro" id="IPR036267">
    <property type="entry name" value="RuvA_C_sf"/>
</dbReference>
<dbReference type="NCBIfam" id="TIGR00084">
    <property type="entry name" value="ruvA"/>
    <property type="match status" value="1"/>
</dbReference>
<dbReference type="Pfam" id="PF14520">
    <property type="entry name" value="HHH_5"/>
    <property type="match status" value="1"/>
</dbReference>
<dbReference type="Pfam" id="PF07499">
    <property type="entry name" value="RuvA_C"/>
    <property type="match status" value="1"/>
</dbReference>
<dbReference type="Pfam" id="PF01330">
    <property type="entry name" value="RuvA_N"/>
    <property type="match status" value="1"/>
</dbReference>
<dbReference type="SMART" id="SM00278">
    <property type="entry name" value="HhH1"/>
    <property type="match status" value="2"/>
</dbReference>
<dbReference type="SUPFAM" id="SSF46929">
    <property type="entry name" value="DNA helicase RuvA subunit, C-terminal domain"/>
    <property type="match status" value="1"/>
</dbReference>
<dbReference type="SUPFAM" id="SSF50249">
    <property type="entry name" value="Nucleic acid-binding proteins"/>
    <property type="match status" value="1"/>
</dbReference>
<dbReference type="SUPFAM" id="SSF47781">
    <property type="entry name" value="RuvA domain 2-like"/>
    <property type="match status" value="1"/>
</dbReference>
<name>RUVA_ECO7I</name>
<proteinExistence type="inferred from homology"/>
<accession>B7NS57</accession>
<sequence length="203" mass="22086">MIGRLRGIIIEKQPPLVLIEVGGVGYEVHMPMTCFYELPEAGQEAIVFTHFVVREDAQLLYGFNNKQERTLFKELIKTNGVGPKLALAILSGMSAQQFVNAVEREEVGALVKLPGIGKKTAERLIVEMKDRFKGLHGDLFTPAADLVLTSPASPATDDAEQEAVAALVALGYKPQEASRMVSKIARPDASSETLIREALRAAL</sequence>
<feature type="chain" id="PRO_1000195144" description="Holliday junction branch migration complex subunit RuvA">
    <location>
        <begin position="1"/>
        <end position="203"/>
    </location>
</feature>
<feature type="region of interest" description="Domain I" evidence="1">
    <location>
        <begin position="1"/>
        <end position="64"/>
    </location>
</feature>
<feature type="region of interest" description="Domain II" evidence="1">
    <location>
        <begin position="65"/>
        <end position="142"/>
    </location>
</feature>
<feature type="region of interest" description="Flexible linker" evidence="1">
    <location>
        <begin position="143"/>
        <end position="154"/>
    </location>
</feature>
<feature type="region of interest" description="Domain III" evidence="1">
    <location>
        <begin position="155"/>
        <end position="203"/>
    </location>
</feature>
<evidence type="ECO:0000255" key="1">
    <source>
        <dbReference type="HAMAP-Rule" id="MF_00031"/>
    </source>
</evidence>
<organism>
    <name type="scientific">Escherichia coli O7:K1 (strain IAI39 / ExPEC)</name>
    <dbReference type="NCBI Taxonomy" id="585057"/>
    <lineage>
        <taxon>Bacteria</taxon>
        <taxon>Pseudomonadati</taxon>
        <taxon>Pseudomonadota</taxon>
        <taxon>Gammaproteobacteria</taxon>
        <taxon>Enterobacterales</taxon>
        <taxon>Enterobacteriaceae</taxon>
        <taxon>Escherichia</taxon>
    </lineage>
</organism>
<protein>
    <recommendedName>
        <fullName evidence="1">Holliday junction branch migration complex subunit RuvA</fullName>
    </recommendedName>
</protein>
<reference key="1">
    <citation type="journal article" date="2009" name="PLoS Genet.">
        <title>Organised genome dynamics in the Escherichia coli species results in highly diverse adaptive paths.</title>
        <authorList>
            <person name="Touchon M."/>
            <person name="Hoede C."/>
            <person name="Tenaillon O."/>
            <person name="Barbe V."/>
            <person name="Baeriswyl S."/>
            <person name="Bidet P."/>
            <person name="Bingen E."/>
            <person name="Bonacorsi S."/>
            <person name="Bouchier C."/>
            <person name="Bouvet O."/>
            <person name="Calteau A."/>
            <person name="Chiapello H."/>
            <person name="Clermont O."/>
            <person name="Cruveiller S."/>
            <person name="Danchin A."/>
            <person name="Diard M."/>
            <person name="Dossat C."/>
            <person name="Karoui M.E."/>
            <person name="Frapy E."/>
            <person name="Garry L."/>
            <person name="Ghigo J.M."/>
            <person name="Gilles A.M."/>
            <person name="Johnson J."/>
            <person name="Le Bouguenec C."/>
            <person name="Lescat M."/>
            <person name="Mangenot S."/>
            <person name="Martinez-Jehanne V."/>
            <person name="Matic I."/>
            <person name="Nassif X."/>
            <person name="Oztas S."/>
            <person name="Petit M.A."/>
            <person name="Pichon C."/>
            <person name="Rouy Z."/>
            <person name="Ruf C.S."/>
            <person name="Schneider D."/>
            <person name="Tourret J."/>
            <person name="Vacherie B."/>
            <person name="Vallenet D."/>
            <person name="Medigue C."/>
            <person name="Rocha E.P.C."/>
            <person name="Denamur E."/>
        </authorList>
    </citation>
    <scope>NUCLEOTIDE SEQUENCE [LARGE SCALE GENOMIC DNA]</scope>
    <source>
        <strain>IAI39 / ExPEC</strain>
    </source>
</reference>